<feature type="chain" id="PRO_1000148067" description="Septation ring formation regulator EzrA">
    <location>
        <begin position="1"/>
        <end position="570"/>
    </location>
</feature>
<feature type="topological domain" description="Extracellular" evidence="1">
    <location>
        <begin position="1"/>
        <end position="6"/>
    </location>
</feature>
<feature type="transmembrane region" description="Helical" evidence="1">
    <location>
        <begin position="7"/>
        <end position="25"/>
    </location>
</feature>
<feature type="topological domain" description="Cytoplasmic" evidence="1">
    <location>
        <begin position="26"/>
        <end position="570"/>
    </location>
</feature>
<feature type="coiled-coil region" evidence="1">
    <location>
        <begin position="115"/>
        <end position="149"/>
    </location>
</feature>
<feature type="coiled-coil region" evidence="1">
    <location>
        <begin position="272"/>
        <end position="304"/>
    </location>
</feature>
<feature type="coiled-coil region" evidence="1">
    <location>
        <begin position="355"/>
        <end position="429"/>
    </location>
</feature>
<sequence>MDSILTIVIIVVSSILVLLMIELVIRNRSYKDIEALEQWKQEIKDKPVADELKRVKDLNMTGQTEELFGKWREEWDEIVSTTIPKADKDLAQARKFASQFSFRKAKHAMNESISGLDDADNRITDILNELQQLLESHEKNSSEIEGLRDTYRSMKKSVLAHRHMYGAAEQKIEEMLDAESEKFKTFEEATNNGDYLKAREIVISLEEGLADLEIIIHQIPDLLVECQATLPVQLEDLLHGHNDMVRQGYVLDYLEVPKEVRDMTKQLQTCLIDIQELHITEAAEKVENLKTRLDGFYDQLEQEVHARHYVEQKTLSVYEDLEEIRTETIETKAETQLVKQSYQLQDKDIESQKVIEKQMHILTKRFEMLQLRVAEQDIAFSIIREELEEIYEQCETLKVLHAEYKEMLQTMRKEEFEAREKLQEMRNTIFETKRFMQKSNLPGLPESIMEDLKRGQMAMQAVYEQLEVKPLNMNAVNSSLEEAYTTVNGVAEMTEELIGQAYLVEKLIQYGNRYRSHDENLAESLNYAEKLFREYQYDAALEQAASVLEQLEPGVVQKIAEYVDNEQTLS</sequence>
<gene>
    <name evidence="1" type="primary">ezrA</name>
    <name type="ordered locus">BAMEG_4932</name>
</gene>
<protein>
    <recommendedName>
        <fullName evidence="1">Septation ring formation regulator EzrA</fullName>
    </recommendedName>
</protein>
<dbReference type="EMBL" id="CP001215">
    <property type="protein sequence ID" value="ACP13048.1"/>
    <property type="molecule type" value="Genomic_DNA"/>
</dbReference>
<dbReference type="RefSeq" id="WP_000377289.1">
    <property type="nucleotide sequence ID" value="NC_012581.1"/>
</dbReference>
<dbReference type="SMR" id="C3L9V6"/>
<dbReference type="GeneID" id="45024522"/>
<dbReference type="KEGG" id="bah:BAMEG_4932"/>
<dbReference type="HOGENOM" id="CLU_034079_1_0_9"/>
<dbReference type="GO" id="GO:0005886">
    <property type="term" value="C:plasma membrane"/>
    <property type="evidence" value="ECO:0007669"/>
    <property type="project" value="UniProtKB-SubCell"/>
</dbReference>
<dbReference type="GO" id="GO:0005940">
    <property type="term" value="C:septin ring"/>
    <property type="evidence" value="ECO:0007669"/>
    <property type="project" value="InterPro"/>
</dbReference>
<dbReference type="GO" id="GO:0000917">
    <property type="term" value="P:division septum assembly"/>
    <property type="evidence" value="ECO:0007669"/>
    <property type="project" value="UniProtKB-KW"/>
</dbReference>
<dbReference type="GO" id="GO:0000921">
    <property type="term" value="P:septin ring assembly"/>
    <property type="evidence" value="ECO:0007669"/>
    <property type="project" value="InterPro"/>
</dbReference>
<dbReference type="HAMAP" id="MF_00728">
    <property type="entry name" value="EzrA"/>
    <property type="match status" value="1"/>
</dbReference>
<dbReference type="InterPro" id="IPR010379">
    <property type="entry name" value="EzrA"/>
</dbReference>
<dbReference type="NCBIfam" id="NF003411">
    <property type="entry name" value="PRK04778.1-5"/>
    <property type="match status" value="1"/>
</dbReference>
<dbReference type="NCBIfam" id="NF003413">
    <property type="entry name" value="PRK04778.1-7"/>
    <property type="match status" value="1"/>
</dbReference>
<dbReference type="Pfam" id="PF06160">
    <property type="entry name" value="EzrA"/>
    <property type="match status" value="1"/>
</dbReference>
<proteinExistence type="inferred from homology"/>
<organism>
    <name type="scientific">Bacillus anthracis (strain CDC 684 / NRRL 3495)</name>
    <dbReference type="NCBI Taxonomy" id="568206"/>
    <lineage>
        <taxon>Bacteria</taxon>
        <taxon>Bacillati</taxon>
        <taxon>Bacillota</taxon>
        <taxon>Bacilli</taxon>
        <taxon>Bacillales</taxon>
        <taxon>Bacillaceae</taxon>
        <taxon>Bacillus</taxon>
        <taxon>Bacillus cereus group</taxon>
    </lineage>
</organism>
<keyword id="KW-0131">Cell cycle</keyword>
<keyword id="KW-0132">Cell division</keyword>
<keyword id="KW-1003">Cell membrane</keyword>
<keyword id="KW-0175">Coiled coil</keyword>
<keyword id="KW-0472">Membrane</keyword>
<keyword id="KW-0717">Septation</keyword>
<keyword id="KW-0812">Transmembrane</keyword>
<keyword id="KW-1133">Transmembrane helix</keyword>
<comment type="function">
    <text evidence="1">Negative regulator of FtsZ ring formation; modulates the frequency and position of FtsZ ring formation. Inhibits FtsZ ring formation at polar sites. Interacts either with FtsZ or with one of its binding partners to promote depolymerization.</text>
</comment>
<comment type="subcellular location">
    <subcellularLocation>
        <location evidence="1">Cell membrane</location>
        <topology evidence="1">Single-pass membrane protein</topology>
    </subcellularLocation>
    <text evidence="1">Colocalized with FtsZ to the nascent septal site.</text>
</comment>
<comment type="similarity">
    <text evidence="1">Belongs to the EzrA family.</text>
</comment>
<accession>C3L9V6</accession>
<name>EZRA_BACAC</name>
<evidence type="ECO:0000255" key="1">
    <source>
        <dbReference type="HAMAP-Rule" id="MF_00728"/>
    </source>
</evidence>
<reference key="1">
    <citation type="submission" date="2008-10" db="EMBL/GenBank/DDBJ databases">
        <title>Genome sequence of Bacillus anthracis str. CDC 684.</title>
        <authorList>
            <person name="Dodson R.J."/>
            <person name="Munk A.C."/>
            <person name="Brettin T."/>
            <person name="Bruce D."/>
            <person name="Detter C."/>
            <person name="Tapia R."/>
            <person name="Han C."/>
            <person name="Sutton G."/>
            <person name="Sims D."/>
        </authorList>
    </citation>
    <scope>NUCLEOTIDE SEQUENCE [LARGE SCALE GENOMIC DNA]</scope>
    <source>
        <strain>CDC 684 / NRRL 3495</strain>
    </source>
</reference>